<evidence type="ECO:0000255" key="1">
    <source>
        <dbReference type="HAMAP-Rule" id="MF_01062"/>
    </source>
</evidence>
<name>PSRP_AROAE</name>
<proteinExistence type="inferred from homology"/>
<reference key="1">
    <citation type="journal article" date="2005" name="Arch. Microbiol.">
        <title>The genome sequence of an anaerobic aromatic-degrading denitrifying bacterium, strain EbN1.</title>
        <authorList>
            <person name="Rabus R."/>
            <person name="Kube M."/>
            <person name="Heider J."/>
            <person name="Beck A."/>
            <person name="Heitmann K."/>
            <person name="Widdel F."/>
            <person name="Reinhardt R."/>
        </authorList>
    </citation>
    <scope>NUCLEOTIDE SEQUENCE [LARGE SCALE GENOMIC DNA]</scope>
    <source>
        <strain>DSM 19018 / LMG 30748 / EbN1</strain>
    </source>
</reference>
<organism>
    <name type="scientific">Aromatoleum aromaticum (strain DSM 19018 / LMG 30748 / EbN1)</name>
    <name type="common">Azoarcus sp. (strain EbN1)</name>
    <dbReference type="NCBI Taxonomy" id="76114"/>
    <lineage>
        <taxon>Bacteria</taxon>
        <taxon>Pseudomonadati</taxon>
        <taxon>Pseudomonadota</taxon>
        <taxon>Betaproteobacteria</taxon>
        <taxon>Rhodocyclales</taxon>
        <taxon>Rhodocyclaceae</taxon>
        <taxon>Aromatoleum</taxon>
    </lineage>
</organism>
<gene>
    <name type="ordered locus">AZOSEA33100</name>
    <name type="ORF">ebA5829</name>
</gene>
<sequence length="277" mass="30984">MSDTPIRTVFFISDGTGITAETLGHSLLAQFPGARFRQVRVPFVDDLDKALDCARQIRETAVTDGVRPIVFSTLVNPDPLSGLREIDALFVDLFEQFINPLEAELGQRSTHTVGRFHGIAESSDYKARIEAINFAMAHDDGVSTDGELADADVILVGVSRSGKTPTSLYLAVQFGVKAANYPLIPEDFERNKLPGELHRHRSKLFGLTIAPERLSQIRQERRPNSRYASIENCRFEIDAAQKLMRRENIQWLDSTSKSIEEISATILQAVRLNRPVY</sequence>
<dbReference type="EC" id="2.7.11.33" evidence="1"/>
<dbReference type="EC" id="2.7.4.28" evidence="1"/>
<dbReference type="EMBL" id="CR555306">
    <property type="protein sequence ID" value="CAI09435.1"/>
    <property type="molecule type" value="Genomic_DNA"/>
</dbReference>
<dbReference type="RefSeq" id="WP_011239098.1">
    <property type="nucleotide sequence ID" value="NC_006513.1"/>
</dbReference>
<dbReference type="SMR" id="Q5NZS9"/>
<dbReference type="STRING" id="76114.ebA5829"/>
<dbReference type="KEGG" id="eba:ebA5829"/>
<dbReference type="eggNOG" id="COG1806">
    <property type="taxonomic scope" value="Bacteria"/>
</dbReference>
<dbReference type="HOGENOM" id="CLU_046206_1_0_4"/>
<dbReference type="OrthoDB" id="9782201at2"/>
<dbReference type="Proteomes" id="UP000006552">
    <property type="component" value="Chromosome"/>
</dbReference>
<dbReference type="GO" id="GO:0043531">
    <property type="term" value="F:ADP binding"/>
    <property type="evidence" value="ECO:0007669"/>
    <property type="project" value="UniProtKB-UniRule"/>
</dbReference>
<dbReference type="GO" id="GO:0005524">
    <property type="term" value="F:ATP binding"/>
    <property type="evidence" value="ECO:0007669"/>
    <property type="project" value="InterPro"/>
</dbReference>
<dbReference type="GO" id="GO:0016776">
    <property type="term" value="F:phosphotransferase activity, phosphate group as acceptor"/>
    <property type="evidence" value="ECO:0007669"/>
    <property type="project" value="UniProtKB-UniRule"/>
</dbReference>
<dbReference type="GO" id="GO:0004674">
    <property type="term" value="F:protein serine/threonine kinase activity"/>
    <property type="evidence" value="ECO:0007669"/>
    <property type="project" value="UniProtKB-UniRule"/>
</dbReference>
<dbReference type="HAMAP" id="MF_01062">
    <property type="entry name" value="PSRP"/>
    <property type="match status" value="1"/>
</dbReference>
<dbReference type="InterPro" id="IPR005177">
    <property type="entry name" value="Kinase-pyrophosphorylase"/>
</dbReference>
<dbReference type="InterPro" id="IPR026530">
    <property type="entry name" value="PSRP"/>
</dbReference>
<dbReference type="NCBIfam" id="NF003742">
    <property type="entry name" value="PRK05339.1"/>
    <property type="match status" value="1"/>
</dbReference>
<dbReference type="PANTHER" id="PTHR31756">
    <property type="entry name" value="PYRUVATE, PHOSPHATE DIKINASE REGULATORY PROTEIN 1, CHLOROPLASTIC"/>
    <property type="match status" value="1"/>
</dbReference>
<dbReference type="PANTHER" id="PTHR31756:SF3">
    <property type="entry name" value="PYRUVATE, PHOSPHATE DIKINASE REGULATORY PROTEIN 1, CHLOROPLASTIC"/>
    <property type="match status" value="1"/>
</dbReference>
<dbReference type="Pfam" id="PF03618">
    <property type="entry name" value="Kinase-PPPase"/>
    <property type="match status" value="1"/>
</dbReference>
<protein>
    <recommendedName>
        <fullName evidence="1">Putative phosphoenolpyruvate synthase regulatory protein</fullName>
        <shortName evidence="1">PEP synthase regulatory protein</shortName>
        <shortName evidence="1">PSRP</shortName>
        <ecNumber evidence="1">2.7.11.33</ecNumber>
        <ecNumber evidence="1">2.7.4.28</ecNumber>
    </recommendedName>
    <alternativeName>
        <fullName evidence="1">Pyruvate, water dikinase regulatory protein</fullName>
    </alternativeName>
</protein>
<accession>Q5NZS9</accession>
<feature type="chain" id="PRO_0000196622" description="Putative phosphoenolpyruvate synthase regulatory protein">
    <location>
        <begin position="1"/>
        <end position="277"/>
    </location>
</feature>
<feature type="binding site" evidence="1">
    <location>
        <begin position="157"/>
        <end position="164"/>
    </location>
    <ligand>
        <name>ADP</name>
        <dbReference type="ChEBI" id="CHEBI:456216"/>
    </ligand>
</feature>
<keyword id="KW-0418">Kinase</keyword>
<keyword id="KW-0547">Nucleotide-binding</keyword>
<keyword id="KW-1185">Reference proteome</keyword>
<keyword id="KW-0723">Serine/threonine-protein kinase</keyword>
<keyword id="KW-0808">Transferase</keyword>
<comment type="function">
    <text evidence="1">Bifunctional serine/threonine kinase and phosphorylase involved in the regulation of the phosphoenolpyruvate synthase (PEPS) by catalyzing its phosphorylation/dephosphorylation.</text>
</comment>
<comment type="catalytic activity">
    <reaction evidence="1">
        <text>[pyruvate, water dikinase] + ADP = [pyruvate, water dikinase]-phosphate + AMP + H(+)</text>
        <dbReference type="Rhea" id="RHEA:46020"/>
        <dbReference type="Rhea" id="RHEA-COMP:11425"/>
        <dbReference type="Rhea" id="RHEA-COMP:11426"/>
        <dbReference type="ChEBI" id="CHEBI:15378"/>
        <dbReference type="ChEBI" id="CHEBI:43176"/>
        <dbReference type="ChEBI" id="CHEBI:68546"/>
        <dbReference type="ChEBI" id="CHEBI:456215"/>
        <dbReference type="ChEBI" id="CHEBI:456216"/>
        <dbReference type="EC" id="2.7.11.33"/>
    </reaction>
</comment>
<comment type="catalytic activity">
    <reaction evidence="1">
        <text>[pyruvate, water dikinase]-phosphate + phosphate + H(+) = [pyruvate, water dikinase] + diphosphate</text>
        <dbReference type="Rhea" id="RHEA:48580"/>
        <dbReference type="Rhea" id="RHEA-COMP:11425"/>
        <dbReference type="Rhea" id="RHEA-COMP:11426"/>
        <dbReference type="ChEBI" id="CHEBI:15378"/>
        <dbReference type="ChEBI" id="CHEBI:33019"/>
        <dbReference type="ChEBI" id="CHEBI:43176"/>
        <dbReference type="ChEBI" id="CHEBI:43474"/>
        <dbReference type="ChEBI" id="CHEBI:68546"/>
        <dbReference type="EC" id="2.7.4.28"/>
    </reaction>
</comment>
<comment type="similarity">
    <text evidence="1">Belongs to the pyruvate, phosphate/water dikinase regulatory protein family. PSRP subfamily.</text>
</comment>